<accession>D3FH24</accession>
<sequence length="655" mass="75387">MENLEKNTKKKIKKPNNFKKNNKDKTEELKDKPTPRMFKMTPKSSKFLHQLGVTGRKHTEKPVPLNDPDYEKKIREIQAKEAKKIRSDEVVNNNSKKQNNNKQAKKKANKNKKQKGNNNNFQNNKKPENWKQKPAANNQVKAIPNSEKSTAKTAINLIIKRTFETLKQNNLIAPNLKQNPNKKDKPQQPNVAAKNNNQKEVKKPYNNFVNNQKNHNKNNAGNKGDNKQPTKPLNQSKLSKSTIVELPFTPNFTSNQPKPTQKEDSKKVKAKKAENSQPQESNKQVKKLEVKTNQQKQDQTKKKQPKENKNQQIKAVNLNNNQQKTNNNNQKNSVDKSENDNNKKKSEANQKQENLNPNNNNKKKEDSKNESNNIPLINKNISDQQIVKISNYIKDNYPVIYADLKEKNRLGFNSNLDDDKLIVYANYEAKDLELLLKKFKVVTNNIGLYEEALTHNSYANEMHLKYNYQRLEFLGDAIINKIVAEYLFNHSDSSEGEMTKDRIKIIQSNTLIKAATQLELINYIRVGEGLKIAPLSPKILEDIFEAFIGAMYLDQGEYAVRKILNDTIIGYYQKGQLTENTDYKSIFQEIIHSTGLNMKIHYERTYDRQKNLHTVSLYAGGIMYGEGKDSSTHKAEIKAAKEAISKFRGLLKLEK</sequence>
<feature type="chain" id="PRO_0000416607" description="Ribonuclease 3">
    <location>
        <begin position="1"/>
        <end position="655"/>
    </location>
</feature>
<feature type="domain" description="RNase III">
    <location>
        <begin position="432"/>
        <end position="556"/>
    </location>
</feature>
<feature type="domain" description="DRBM">
    <location>
        <begin position="582"/>
        <end position="649"/>
    </location>
</feature>
<feature type="region of interest" description="Unknown">
    <location>
        <begin position="1"/>
        <end position="400"/>
    </location>
</feature>
<feature type="region of interest" description="Disordered" evidence="3">
    <location>
        <begin position="1"/>
        <end position="148"/>
    </location>
</feature>
<feature type="region of interest" description="Disordered" evidence="3">
    <location>
        <begin position="171"/>
        <end position="376"/>
    </location>
</feature>
<feature type="region of interest" description="RNase 3">
    <location>
        <begin position="401"/>
        <end position="655"/>
    </location>
</feature>
<feature type="compositionally biased region" description="Basic residues" evidence="3">
    <location>
        <begin position="8"/>
        <end position="20"/>
    </location>
</feature>
<feature type="compositionally biased region" description="Basic and acidic residues" evidence="3">
    <location>
        <begin position="21"/>
        <end position="34"/>
    </location>
</feature>
<feature type="compositionally biased region" description="Basic and acidic residues" evidence="3">
    <location>
        <begin position="69"/>
        <end position="89"/>
    </location>
</feature>
<feature type="compositionally biased region" description="Low complexity" evidence="3">
    <location>
        <begin position="92"/>
        <end position="102"/>
    </location>
</feature>
<feature type="compositionally biased region" description="Basic residues" evidence="3">
    <location>
        <begin position="103"/>
        <end position="115"/>
    </location>
</feature>
<feature type="compositionally biased region" description="Polar residues" evidence="3">
    <location>
        <begin position="135"/>
        <end position="148"/>
    </location>
</feature>
<feature type="compositionally biased region" description="Low complexity" evidence="3">
    <location>
        <begin position="206"/>
        <end position="223"/>
    </location>
</feature>
<feature type="compositionally biased region" description="Polar residues" evidence="3">
    <location>
        <begin position="229"/>
        <end position="242"/>
    </location>
</feature>
<feature type="compositionally biased region" description="Polar residues" evidence="3">
    <location>
        <begin position="250"/>
        <end position="259"/>
    </location>
</feature>
<feature type="compositionally biased region" description="Basic and acidic residues" evidence="3">
    <location>
        <begin position="260"/>
        <end position="274"/>
    </location>
</feature>
<feature type="compositionally biased region" description="Basic and acidic residues" evidence="3">
    <location>
        <begin position="298"/>
        <end position="309"/>
    </location>
</feature>
<feature type="compositionally biased region" description="Low complexity" evidence="3">
    <location>
        <begin position="310"/>
        <end position="332"/>
    </location>
</feature>
<feature type="compositionally biased region" description="Basic and acidic residues" evidence="3">
    <location>
        <begin position="333"/>
        <end position="350"/>
    </location>
</feature>
<feature type="compositionally biased region" description="Low complexity" evidence="3">
    <location>
        <begin position="351"/>
        <end position="360"/>
    </location>
</feature>
<feature type="active site" evidence="2">
    <location>
        <position position="476"/>
    </location>
</feature>
<feature type="active site" evidence="1">
    <location>
        <position position="545"/>
    </location>
</feature>
<feature type="binding site" evidence="1">
    <location>
        <position position="472"/>
    </location>
    <ligand>
        <name>Mg(2+)</name>
        <dbReference type="ChEBI" id="CHEBI:18420"/>
    </ligand>
</feature>
<feature type="binding site" evidence="1">
    <location>
        <position position="542"/>
    </location>
    <ligand>
        <name>Mg(2+)</name>
        <dbReference type="ChEBI" id="CHEBI:18420"/>
    </ligand>
</feature>
<feature type="binding site" evidence="1">
    <location>
        <position position="545"/>
    </location>
    <ligand>
        <name>Mg(2+)</name>
        <dbReference type="ChEBI" id="CHEBI:18420"/>
    </ligand>
</feature>
<proteinExistence type="inferred from homology"/>
<name>RNC_MYCGH</name>
<organism>
    <name type="scientific">Mycoplasmoides gallisepticum (strain R(high / passage 156))</name>
    <name type="common">Mycoplasma gallisepticum</name>
    <dbReference type="NCBI Taxonomy" id="710128"/>
    <lineage>
        <taxon>Bacteria</taxon>
        <taxon>Bacillati</taxon>
        <taxon>Mycoplasmatota</taxon>
        <taxon>Mycoplasmoidales</taxon>
        <taxon>Mycoplasmoidaceae</taxon>
        <taxon>Mycoplasmoides</taxon>
    </lineage>
</organism>
<protein>
    <recommendedName>
        <fullName>Ribonuclease 3</fullName>
        <ecNumber>3.1.26.3</ecNumber>
    </recommendedName>
    <alternativeName>
        <fullName>Ribonuclease III</fullName>
        <shortName>RNase III</shortName>
    </alternativeName>
</protein>
<keyword id="KW-0963">Cytoplasm</keyword>
<keyword id="KW-0255">Endonuclease</keyword>
<keyword id="KW-0378">Hydrolase</keyword>
<keyword id="KW-0460">Magnesium</keyword>
<keyword id="KW-0479">Metal-binding</keyword>
<keyword id="KW-0507">mRNA processing</keyword>
<keyword id="KW-0540">Nuclease</keyword>
<keyword id="KW-0694">RNA-binding</keyword>
<keyword id="KW-0698">rRNA processing</keyword>
<keyword id="KW-0699">rRNA-binding</keyword>
<keyword id="KW-0819">tRNA processing</keyword>
<reference key="1">
    <citation type="journal article" date="2010" name="Infect. Immun.">
        <title>Comparative genomic analyses of attenuated strains of Mycoplasma gallisepticum.</title>
        <authorList>
            <person name="Szczepanek S.M."/>
            <person name="Tulman E.R."/>
            <person name="Gorton T.S."/>
            <person name="Liao X."/>
            <person name="Lu Z."/>
            <person name="Zinski J."/>
            <person name="Aziz F."/>
            <person name="Frasca S. Jr."/>
            <person name="Kutish G.F."/>
            <person name="Geary S.J."/>
        </authorList>
    </citation>
    <scope>NUCLEOTIDE SEQUENCE [LARGE SCALE GENOMIC DNA]</scope>
    <source>
        <strain>R(high / passage 156)</strain>
    </source>
</reference>
<comment type="function">
    <text evidence="1">Digests double-stranded RNA. Involved in the processing of primary rRNA transcript to yield the immediate precursors to the large and small rRNAs (23S and 16S). Processes some mRNAs, and tRNAs when they are encoded in the rRNA operon. Processes pre-crRNA and tracrRNA of type II CRISPR loci if present in the organism (By similarity).</text>
</comment>
<comment type="catalytic activity">
    <reaction>
        <text>Endonucleolytic cleavage to 5'-phosphomonoester.</text>
        <dbReference type="EC" id="3.1.26.3"/>
    </reaction>
</comment>
<comment type="cofactor">
    <cofactor evidence="1">
        <name>Mg(2+)</name>
        <dbReference type="ChEBI" id="CHEBI:18420"/>
    </cofactor>
</comment>
<comment type="subunit">
    <text evidence="1">Homodimer.</text>
</comment>
<comment type="subcellular location">
    <subcellularLocation>
        <location evidence="1">Cytoplasm</location>
    </subcellularLocation>
</comment>
<comment type="similarity">
    <text evidence="4">Belongs to the ribonuclease III family.</text>
</comment>
<dbReference type="EC" id="3.1.26.3"/>
<dbReference type="EMBL" id="CP001872">
    <property type="protein sequence ID" value="ADC30700.1"/>
    <property type="molecule type" value="Genomic_DNA"/>
</dbReference>
<dbReference type="RefSeq" id="WP_011113742.1">
    <property type="nucleotide sequence ID" value="NC_017502.1"/>
</dbReference>
<dbReference type="SMR" id="D3FH24"/>
<dbReference type="KEGG" id="mgh:MGAH_0180"/>
<dbReference type="PATRIC" id="fig|233150.7.peg.551"/>
<dbReference type="HOGENOM" id="CLU_418462_0_0_14"/>
<dbReference type="GO" id="GO:0005737">
    <property type="term" value="C:cytoplasm"/>
    <property type="evidence" value="ECO:0007669"/>
    <property type="project" value="UniProtKB-SubCell"/>
</dbReference>
<dbReference type="GO" id="GO:0046872">
    <property type="term" value="F:metal ion binding"/>
    <property type="evidence" value="ECO:0007669"/>
    <property type="project" value="UniProtKB-KW"/>
</dbReference>
<dbReference type="GO" id="GO:0004525">
    <property type="term" value="F:ribonuclease III activity"/>
    <property type="evidence" value="ECO:0007669"/>
    <property type="project" value="UniProtKB-UniRule"/>
</dbReference>
<dbReference type="GO" id="GO:0019843">
    <property type="term" value="F:rRNA binding"/>
    <property type="evidence" value="ECO:0007669"/>
    <property type="project" value="UniProtKB-KW"/>
</dbReference>
<dbReference type="GO" id="GO:0006397">
    <property type="term" value="P:mRNA processing"/>
    <property type="evidence" value="ECO:0007669"/>
    <property type="project" value="UniProtKB-UniRule"/>
</dbReference>
<dbReference type="GO" id="GO:0006364">
    <property type="term" value="P:rRNA processing"/>
    <property type="evidence" value="ECO:0007669"/>
    <property type="project" value="UniProtKB-UniRule"/>
</dbReference>
<dbReference type="GO" id="GO:0008033">
    <property type="term" value="P:tRNA processing"/>
    <property type="evidence" value="ECO:0007669"/>
    <property type="project" value="UniProtKB-KW"/>
</dbReference>
<dbReference type="CDD" id="cd00593">
    <property type="entry name" value="RIBOc"/>
    <property type="match status" value="1"/>
</dbReference>
<dbReference type="Gene3D" id="1.10.1520.10">
    <property type="entry name" value="Ribonuclease III domain"/>
    <property type="match status" value="1"/>
</dbReference>
<dbReference type="HAMAP" id="MF_00104">
    <property type="entry name" value="RNase_III"/>
    <property type="match status" value="1"/>
</dbReference>
<dbReference type="InterPro" id="IPR014720">
    <property type="entry name" value="dsRBD_dom"/>
</dbReference>
<dbReference type="InterPro" id="IPR011907">
    <property type="entry name" value="RNase_III"/>
</dbReference>
<dbReference type="InterPro" id="IPR000999">
    <property type="entry name" value="RNase_III_dom"/>
</dbReference>
<dbReference type="InterPro" id="IPR036389">
    <property type="entry name" value="RNase_III_sf"/>
</dbReference>
<dbReference type="NCBIfam" id="TIGR02191">
    <property type="entry name" value="RNaseIII"/>
    <property type="match status" value="1"/>
</dbReference>
<dbReference type="PANTHER" id="PTHR14950">
    <property type="entry name" value="DICER-RELATED"/>
    <property type="match status" value="1"/>
</dbReference>
<dbReference type="PANTHER" id="PTHR14950:SF37">
    <property type="entry name" value="ENDORIBONUCLEASE DICER"/>
    <property type="match status" value="1"/>
</dbReference>
<dbReference type="Pfam" id="PF00035">
    <property type="entry name" value="dsrm"/>
    <property type="match status" value="1"/>
</dbReference>
<dbReference type="Pfam" id="PF14622">
    <property type="entry name" value="Ribonucleas_3_3"/>
    <property type="match status" value="1"/>
</dbReference>
<dbReference type="SMART" id="SM00535">
    <property type="entry name" value="RIBOc"/>
    <property type="match status" value="1"/>
</dbReference>
<dbReference type="SUPFAM" id="SSF54768">
    <property type="entry name" value="dsRNA-binding domain-like"/>
    <property type="match status" value="1"/>
</dbReference>
<dbReference type="SUPFAM" id="SSF69065">
    <property type="entry name" value="RNase III domain-like"/>
    <property type="match status" value="1"/>
</dbReference>
<dbReference type="PROSITE" id="PS00517">
    <property type="entry name" value="RNASE_3_1"/>
    <property type="match status" value="1"/>
</dbReference>
<dbReference type="PROSITE" id="PS50142">
    <property type="entry name" value="RNASE_3_2"/>
    <property type="match status" value="1"/>
</dbReference>
<evidence type="ECO:0000250" key="1"/>
<evidence type="ECO:0000255" key="2"/>
<evidence type="ECO:0000256" key="3">
    <source>
        <dbReference type="SAM" id="MobiDB-lite"/>
    </source>
</evidence>
<evidence type="ECO:0000305" key="4"/>
<gene>
    <name type="primary">rnc</name>
    <name type="ordered locus">MGAH_0180</name>
</gene>